<sequence>MARNVFCAYLKQEAEGLDFQLYPGELGKRIFDSISKQAWAEWIKKQTMLVNEKKLNMMNPEHRQLLETEMVNFLFEGKEVHIEGYVPVESK</sequence>
<keyword id="KW-0408">Iron</keyword>
<keyword id="KW-1185">Reference proteome</keyword>
<comment type="function">
    <text evidence="1">Could be a mediator in iron transactions between iron acquisition and iron-requiring processes, such as synthesis and/or repair of Fe-S clusters in biosynthetic enzymes.</text>
</comment>
<comment type="similarity">
    <text evidence="1">Belongs to the Fe(2+)-trafficking protein family.</text>
</comment>
<dbReference type="EMBL" id="CP001321">
    <property type="protein sequence ID" value="ACL32901.1"/>
    <property type="molecule type" value="Genomic_DNA"/>
</dbReference>
<dbReference type="RefSeq" id="WP_005713208.1">
    <property type="nucleotide sequence ID" value="NC_011852.1"/>
</dbReference>
<dbReference type="SMR" id="B8F6E9"/>
<dbReference type="STRING" id="557723.HAPS_1309"/>
<dbReference type="KEGG" id="hap:HAPS_1309"/>
<dbReference type="HOGENOM" id="CLU_170994_0_0_6"/>
<dbReference type="Proteomes" id="UP000006743">
    <property type="component" value="Chromosome"/>
</dbReference>
<dbReference type="GO" id="GO:0005829">
    <property type="term" value="C:cytosol"/>
    <property type="evidence" value="ECO:0007669"/>
    <property type="project" value="TreeGrafter"/>
</dbReference>
<dbReference type="GO" id="GO:0005506">
    <property type="term" value="F:iron ion binding"/>
    <property type="evidence" value="ECO:0007669"/>
    <property type="project" value="UniProtKB-UniRule"/>
</dbReference>
<dbReference type="GO" id="GO:0034599">
    <property type="term" value="P:cellular response to oxidative stress"/>
    <property type="evidence" value="ECO:0007669"/>
    <property type="project" value="TreeGrafter"/>
</dbReference>
<dbReference type="FunFam" id="1.10.3880.10:FF:000001">
    <property type="entry name" value="Probable Fe(2+)-trafficking protein"/>
    <property type="match status" value="1"/>
</dbReference>
<dbReference type="Gene3D" id="1.10.3880.10">
    <property type="entry name" value="Fe(II) trafficking protein YggX"/>
    <property type="match status" value="1"/>
</dbReference>
<dbReference type="HAMAP" id="MF_00686">
    <property type="entry name" value="Fe_traffic_YggX"/>
    <property type="match status" value="1"/>
</dbReference>
<dbReference type="InterPro" id="IPR007457">
    <property type="entry name" value="Fe_traffick_prot_YggX"/>
</dbReference>
<dbReference type="InterPro" id="IPR036766">
    <property type="entry name" value="Fe_traffick_prot_YggX_sf"/>
</dbReference>
<dbReference type="NCBIfam" id="NF003817">
    <property type="entry name" value="PRK05408.1"/>
    <property type="match status" value="1"/>
</dbReference>
<dbReference type="PANTHER" id="PTHR36965">
    <property type="entry name" value="FE(2+)-TRAFFICKING PROTEIN-RELATED"/>
    <property type="match status" value="1"/>
</dbReference>
<dbReference type="PANTHER" id="PTHR36965:SF1">
    <property type="entry name" value="FE(2+)-TRAFFICKING PROTEIN-RELATED"/>
    <property type="match status" value="1"/>
</dbReference>
<dbReference type="Pfam" id="PF04362">
    <property type="entry name" value="Iron_traffic"/>
    <property type="match status" value="1"/>
</dbReference>
<dbReference type="PIRSF" id="PIRSF029827">
    <property type="entry name" value="Fe_traffic_YggX"/>
    <property type="match status" value="1"/>
</dbReference>
<dbReference type="SUPFAM" id="SSF111148">
    <property type="entry name" value="YggX-like"/>
    <property type="match status" value="1"/>
</dbReference>
<proteinExistence type="inferred from homology"/>
<reference key="1">
    <citation type="journal article" date="2009" name="J. Bacteriol.">
        <title>Complete genome sequence of Haemophilus parasuis SH0165.</title>
        <authorList>
            <person name="Yue M."/>
            <person name="Yang F."/>
            <person name="Yang J."/>
            <person name="Bei W."/>
            <person name="Cai X."/>
            <person name="Chen L."/>
            <person name="Dong J."/>
            <person name="Zhou R."/>
            <person name="Jin M."/>
            <person name="Jin Q."/>
            <person name="Chen H."/>
        </authorList>
    </citation>
    <scope>NUCLEOTIDE SEQUENCE [LARGE SCALE GENOMIC DNA]</scope>
    <source>
        <strain>SH0165</strain>
    </source>
</reference>
<gene>
    <name type="ordered locus">HAPS_1309</name>
</gene>
<accession>B8F6E9</accession>
<name>FETP_GLAP5</name>
<protein>
    <recommendedName>
        <fullName evidence="1">Probable Fe(2+)-trafficking protein</fullName>
    </recommendedName>
</protein>
<organism>
    <name type="scientific">Glaesserella parasuis serovar 5 (strain SH0165)</name>
    <name type="common">Haemophilus parasuis</name>
    <dbReference type="NCBI Taxonomy" id="557723"/>
    <lineage>
        <taxon>Bacteria</taxon>
        <taxon>Pseudomonadati</taxon>
        <taxon>Pseudomonadota</taxon>
        <taxon>Gammaproteobacteria</taxon>
        <taxon>Pasteurellales</taxon>
        <taxon>Pasteurellaceae</taxon>
        <taxon>Glaesserella</taxon>
    </lineage>
</organism>
<evidence type="ECO:0000255" key="1">
    <source>
        <dbReference type="HAMAP-Rule" id="MF_00686"/>
    </source>
</evidence>
<feature type="chain" id="PRO_1000147767" description="Probable Fe(2+)-trafficking protein">
    <location>
        <begin position="1"/>
        <end position="91"/>
    </location>
</feature>